<reference key="1">
    <citation type="journal article" date="2004" name="J. Mol. Microbiol. Biotechnol.">
        <title>The complete genome sequence of Bacillus licheniformis DSM13, an organism with great industrial potential.</title>
        <authorList>
            <person name="Veith B."/>
            <person name="Herzberg C."/>
            <person name="Steckel S."/>
            <person name="Feesche J."/>
            <person name="Maurer K.H."/>
            <person name="Ehrenreich P."/>
            <person name="Baeumer S."/>
            <person name="Henne A."/>
            <person name="Liesegang H."/>
            <person name="Merkl R."/>
            <person name="Ehrenreich A."/>
            <person name="Gottschalk G."/>
        </authorList>
    </citation>
    <scope>NUCLEOTIDE SEQUENCE [LARGE SCALE GENOMIC DNA]</scope>
    <source>
        <strain>ATCC 14580 / DSM 13 / JCM 2505 / CCUG 7422 / NBRC 12200 / NCIMB 9375 / NCTC 10341 / NRRL NRS-1264 / Gibson 46</strain>
    </source>
</reference>
<reference key="2">
    <citation type="journal article" date="2004" name="Genome Biol.">
        <title>Complete genome sequence of the industrial bacterium Bacillus licheniformis and comparisons with closely related Bacillus species.</title>
        <authorList>
            <person name="Rey M.W."/>
            <person name="Ramaiya P."/>
            <person name="Nelson B.A."/>
            <person name="Brody-Karpin S.D."/>
            <person name="Zaretsky E.J."/>
            <person name="Tang M."/>
            <person name="Lopez de Leon A."/>
            <person name="Xiang H."/>
            <person name="Gusti V."/>
            <person name="Clausen I.G."/>
            <person name="Olsen P.B."/>
            <person name="Rasmussen M.D."/>
            <person name="Andersen J.T."/>
            <person name="Joergensen P.L."/>
            <person name="Larsen T.S."/>
            <person name="Sorokin A."/>
            <person name="Bolotin A."/>
            <person name="Lapidus A."/>
            <person name="Galleron N."/>
            <person name="Ehrlich S.D."/>
            <person name="Berka R.M."/>
        </authorList>
    </citation>
    <scope>NUCLEOTIDE SEQUENCE [LARGE SCALE GENOMIC DNA]</scope>
    <source>
        <strain>ATCC 14580 / DSM 13 / JCM 2505 / CCUG 7422 / NBRC 12200 / NCIMB 9375 / NCTC 10341 / NRRL NRS-1264 / Gibson 46</strain>
    </source>
</reference>
<dbReference type="EMBL" id="AE017333">
    <property type="protein sequence ID" value="AAU41899.1"/>
    <property type="molecule type" value="Genomic_DNA"/>
</dbReference>
<dbReference type="EMBL" id="CP000002">
    <property type="protein sequence ID" value="AAU24540.1"/>
    <property type="molecule type" value="Genomic_DNA"/>
</dbReference>
<dbReference type="RefSeq" id="WP_003184266.1">
    <property type="nucleotide sequence ID" value="NC_006322.1"/>
</dbReference>
<dbReference type="SMR" id="Q65GB5"/>
<dbReference type="STRING" id="279010.BL00356"/>
<dbReference type="GeneID" id="92860373"/>
<dbReference type="KEGG" id="bld:BLi03033"/>
<dbReference type="KEGG" id="bli:BL00356"/>
<dbReference type="eggNOG" id="COG0292">
    <property type="taxonomic scope" value="Bacteria"/>
</dbReference>
<dbReference type="HOGENOM" id="CLU_123265_0_1_9"/>
<dbReference type="Proteomes" id="UP000000606">
    <property type="component" value="Chromosome"/>
</dbReference>
<dbReference type="GO" id="GO:1990904">
    <property type="term" value="C:ribonucleoprotein complex"/>
    <property type="evidence" value="ECO:0007669"/>
    <property type="project" value="UniProtKB-KW"/>
</dbReference>
<dbReference type="GO" id="GO:0005840">
    <property type="term" value="C:ribosome"/>
    <property type="evidence" value="ECO:0007669"/>
    <property type="project" value="UniProtKB-KW"/>
</dbReference>
<dbReference type="GO" id="GO:0019843">
    <property type="term" value="F:rRNA binding"/>
    <property type="evidence" value="ECO:0007669"/>
    <property type="project" value="UniProtKB-UniRule"/>
</dbReference>
<dbReference type="GO" id="GO:0003735">
    <property type="term" value="F:structural constituent of ribosome"/>
    <property type="evidence" value="ECO:0007669"/>
    <property type="project" value="InterPro"/>
</dbReference>
<dbReference type="GO" id="GO:0000027">
    <property type="term" value="P:ribosomal large subunit assembly"/>
    <property type="evidence" value="ECO:0007669"/>
    <property type="project" value="UniProtKB-UniRule"/>
</dbReference>
<dbReference type="GO" id="GO:0006412">
    <property type="term" value="P:translation"/>
    <property type="evidence" value="ECO:0007669"/>
    <property type="project" value="InterPro"/>
</dbReference>
<dbReference type="CDD" id="cd07026">
    <property type="entry name" value="Ribosomal_L20"/>
    <property type="match status" value="1"/>
</dbReference>
<dbReference type="FunFam" id="1.10.1900.20:FF:000001">
    <property type="entry name" value="50S ribosomal protein L20"/>
    <property type="match status" value="1"/>
</dbReference>
<dbReference type="Gene3D" id="6.10.160.10">
    <property type="match status" value="1"/>
</dbReference>
<dbReference type="Gene3D" id="1.10.1900.20">
    <property type="entry name" value="Ribosomal protein L20"/>
    <property type="match status" value="1"/>
</dbReference>
<dbReference type="HAMAP" id="MF_00382">
    <property type="entry name" value="Ribosomal_bL20"/>
    <property type="match status" value="1"/>
</dbReference>
<dbReference type="InterPro" id="IPR005813">
    <property type="entry name" value="Ribosomal_bL20"/>
</dbReference>
<dbReference type="InterPro" id="IPR049946">
    <property type="entry name" value="RIBOSOMAL_L20_CS"/>
</dbReference>
<dbReference type="InterPro" id="IPR035566">
    <property type="entry name" value="Ribosomal_protein_bL20_C"/>
</dbReference>
<dbReference type="NCBIfam" id="TIGR01032">
    <property type="entry name" value="rplT_bact"/>
    <property type="match status" value="1"/>
</dbReference>
<dbReference type="PANTHER" id="PTHR10986">
    <property type="entry name" value="39S RIBOSOMAL PROTEIN L20"/>
    <property type="match status" value="1"/>
</dbReference>
<dbReference type="Pfam" id="PF00453">
    <property type="entry name" value="Ribosomal_L20"/>
    <property type="match status" value="1"/>
</dbReference>
<dbReference type="PRINTS" id="PR00062">
    <property type="entry name" value="RIBOSOMALL20"/>
</dbReference>
<dbReference type="SUPFAM" id="SSF74731">
    <property type="entry name" value="Ribosomal protein L20"/>
    <property type="match status" value="1"/>
</dbReference>
<dbReference type="PROSITE" id="PS00937">
    <property type="entry name" value="RIBOSOMAL_L20"/>
    <property type="match status" value="1"/>
</dbReference>
<comment type="function">
    <text evidence="1">Binds directly to 23S ribosomal RNA and is necessary for the in vitro assembly process of the 50S ribosomal subunit. It is not involved in the protein synthesizing functions of that subunit.</text>
</comment>
<comment type="similarity">
    <text evidence="1">Belongs to the bacterial ribosomal protein bL20 family.</text>
</comment>
<name>RL20_BACLD</name>
<protein>
    <recommendedName>
        <fullName evidence="1">Large ribosomal subunit protein bL20</fullName>
    </recommendedName>
    <alternativeName>
        <fullName evidence="2">50S ribosomal protein L20</fullName>
    </alternativeName>
</protein>
<organism>
    <name type="scientific">Bacillus licheniformis (strain ATCC 14580 / DSM 13 / JCM 2505 / CCUG 7422 / NBRC 12200 / NCIMB 9375 / NCTC 10341 / NRRL NRS-1264 / Gibson 46)</name>
    <dbReference type="NCBI Taxonomy" id="279010"/>
    <lineage>
        <taxon>Bacteria</taxon>
        <taxon>Bacillati</taxon>
        <taxon>Bacillota</taxon>
        <taxon>Bacilli</taxon>
        <taxon>Bacillales</taxon>
        <taxon>Bacillaceae</taxon>
        <taxon>Bacillus</taxon>
    </lineage>
</organism>
<gene>
    <name evidence="1" type="primary">rplT</name>
    <name type="ordered locus">BLi03033</name>
    <name type="ordered locus">BL00356</name>
</gene>
<accession>Q65GB5</accession>
<accession>Q62RS0</accession>
<sequence length="119" mass="13651">MPRVKGGTVTRKRRKKVLKLAKGYFGSKHTLYKVANQQVMKSGNYAFRDRRQKKRDFRKLWITRINAAARMNGLSYSRLMHGLKLSGIEVNRKMLADLAVNDLNAFNQLADAAKAQLNK</sequence>
<feature type="chain" id="PRO_0000243655" description="Large ribosomal subunit protein bL20">
    <location>
        <begin position="1"/>
        <end position="119"/>
    </location>
</feature>
<evidence type="ECO:0000255" key="1">
    <source>
        <dbReference type="HAMAP-Rule" id="MF_00382"/>
    </source>
</evidence>
<evidence type="ECO:0000305" key="2"/>
<proteinExistence type="inferred from homology"/>
<keyword id="KW-1185">Reference proteome</keyword>
<keyword id="KW-0687">Ribonucleoprotein</keyword>
<keyword id="KW-0689">Ribosomal protein</keyword>
<keyword id="KW-0694">RNA-binding</keyword>
<keyword id="KW-0699">rRNA-binding</keyword>